<sequence>MSCLPALDKFLQNYHQAYLTTLGELPRYYPQGEPSVCIQGEFFADSDKPIAWQPVKRDEVGSFTNVEHALDLPLWPDIHLFYGQYFSAPLLFDSKWGTGELLQVWNDDDFKCLQQNVIGHLMMKKKLKQPPTWFIGLLDEGDKMLTINNSDGSVWIEIPGEEQSEQLSTSLTAFIEALSPRIAPPVKHEELPMPALDHPGIFANIKRMWQNLFGKS</sequence>
<keyword id="KW-0997">Cell inner membrane</keyword>
<keyword id="KW-1003">Cell membrane</keyword>
<keyword id="KW-0472">Membrane</keyword>
<evidence type="ECO:0000255" key="1">
    <source>
        <dbReference type="HAMAP-Rule" id="MF_01104"/>
    </source>
</evidence>
<proteinExistence type="inferred from homology"/>
<dbReference type="EMBL" id="CP000681">
    <property type="protein sequence ID" value="ABP75058.1"/>
    <property type="molecule type" value="Genomic_DNA"/>
</dbReference>
<dbReference type="SMR" id="A4Y525"/>
<dbReference type="STRING" id="319224.Sputcn32_1330"/>
<dbReference type="KEGG" id="spc:Sputcn32_1330"/>
<dbReference type="eggNOG" id="ENOG502ZCMR">
    <property type="taxonomic scope" value="Bacteria"/>
</dbReference>
<dbReference type="HOGENOM" id="CLU_121866_0_0_6"/>
<dbReference type="GO" id="GO:0009898">
    <property type="term" value="C:cytoplasmic side of plasma membrane"/>
    <property type="evidence" value="ECO:0007669"/>
    <property type="project" value="InterPro"/>
</dbReference>
<dbReference type="CDD" id="cd16323">
    <property type="entry name" value="Syd"/>
    <property type="match status" value="1"/>
</dbReference>
<dbReference type="Gene3D" id="3.40.1580.20">
    <property type="entry name" value="Syd protein"/>
    <property type="match status" value="1"/>
</dbReference>
<dbReference type="HAMAP" id="MF_01104">
    <property type="entry name" value="Syd"/>
    <property type="match status" value="1"/>
</dbReference>
<dbReference type="InterPro" id="IPR009948">
    <property type="entry name" value="Syd"/>
</dbReference>
<dbReference type="InterPro" id="IPR038228">
    <property type="entry name" value="Syd_sf"/>
</dbReference>
<dbReference type="NCBIfam" id="NF003439">
    <property type="entry name" value="PRK04968.1"/>
    <property type="match status" value="1"/>
</dbReference>
<dbReference type="Pfam" id="PF07348">
    <property type="entry name" value="Syd"/>
    <property type="match status" value="1"/>
</dbReference>
<comment type="function">
    <text evidence="1">Interacts with the SecY protein in vivo. May bind preferentially to an uncomplexed state of SecY, thus functioning either as a chelating agent for excess SecY in the cell or as a regulatory factor that negatively controls the translocase function.</text>
</comment>
<comment type="subcellular location">
    <subcellularLocation>
        <location evidence="1">Cell inner membrane</location>
        <topology evidence="1">Peripheral membrane protein</topology>
        <orientation evidence="1">Cytoplasmic side</orientation>
    </subcellularLocation>
    <text evidence="1">Loosely associated with the cytoplasmic side of the inner membrane, probably via SecY.</text>
</comment>
<comment type="similarity">
    <text evidence="1">Belongs to the Syd family.</text>
</comment>
<gene>
    <name evidence="1" type="primary">syd</name>
    <name type="ordered locus">Sputcn32_1330</name>
</gene>
<accession>A4Y525</accession>
<feature type="chain" id="PRO_1000065045" description="Protein Syd">
    <location>
        <begin position="1"/>
        <end position="216"/>
    </location>
</feature>
<protein>
    <recommendedName>
        <fullName evidence="1">Protein Syd</fullName>
    </recommendedName>
</protein>
<organism>
    <name type="scientific">Shewanella putrefaciens (strain CN-32 / ATCC BAA-453)</name>
    <dbReference type="NCBI Taxonomy" id="319224"/>
    <lineage>
        <taxon>Bacteria</taxon>
        <taxon>Pseudomonadati</taxon>
        <taxon>Pseudomonadota</taxon>
        <taxon>Gammaproteobacteria</taxon>
        <taxon>Alteromonadales</taxon>
        <taxon>Shewanellaceae</taxon>
        <taxon>Shewanella</taxon>
    </lineage>
</organism>
<reference key="1">
    <citation type="submission" date="2007-04" db="EMBL/GenBank/DDBJ databases">
        <title>Complete sequence of Shewanella putrefaciens CN-32.</title>
        <authorList>
            <consortium name="US DOE Joint Genome Institute"/>
            <person name="Copeland A."/>
            <person name="Lucas S."/>
            <person name="Lapidus A."/>
            <person name="Barry K."/>
            <person name="Detter J.C."/>
            <person name="Glavina del Rio T."/>
            <person name="Hammon N."/>
            <person name="Israni S."/>
            <person name="Dalin E."/>
            <person name="Tice H."/>
            <person name="Pitluck S."/>
            <person name="Chain P."/>
            <person name="Malfatti S."/>
            <person name="Shin M."/>
            <person name="Vergez L."/>
            <person name="Schmutz J."/>
            <person name="Larimer F."/>
            <person name="Land M."/>
            <person name="Hauser L."/>
            <person name="Kyrpides N."/>
            <person name="Mikhailova N."/>
            <person name="Romine M.F."/>
            <person name="Fredrickson J."/>
            <person name="Tiedje J."/>
            <person name="Richardson P."/>
        </authorList>
    </citation>
    <scope>NUCLEOTIDE SEQUENCE [LARGE SCALE GENOMIC DNA]</scope>
    <source>
        <strain>CN-32 / ATCC BAA-453</strain>
    </source>
</reference>
<name>SYDP_SHEPC</name>